<protein>
    <recommendedName>
        <fullName>FMRFamide-like neuropeptide 18</fullName>
    </recommendedName>
    <component>
        <recommendedName>
            <fullName>EMPGVLRF-amide</fullName>
        </recommendedName>
    </component>
    <component>
        <recommendedName>
            <fullName>SVPGVLRF-amide 1</fullName>
        </recommendedName>
    </component>
    <component>
        <recommendedName>
            <fullName>SVPGVLRF-amide 2</fullName>
        </recommendedName>
    </component>
    <component>
        <recommendedName>
            <fullName>EIPGVLRF-amide</fullName>
        </recommendedName>
    </component>
    <component>
        <recommendedName>
            <fullName>SEVPGVLRF-amide</fullName>
        </recommendedName>
    </component>
    <component>
        <recommendedName>
            <fullName>DVPGVLRF-amide</fullName>
        </recommendedName>
    </component>
    <component>
        <recommendedName>
            <fullName>SVPGVLRF-amide 3</fullName>
        </recommendedName>
    </component>
</protein>
<gene>
    <name evidence="12" type="primary">flp-18</name>
    <name evidence="12" type="ORF">Y48D7A.2</name>
</gene>
<reference evidence="10" key="1">
    <citation type="journal article" date="1998" name="Science">
        <title>Genome sequence of the nematode C. elegans: a platform for investigating biology.</title>
        <authorList>
            <consortium name="The C. elegans sequencing consortium"/>
        </authorList>
    </citation>
    <scope>NUCLEOTIDE SEQUENCE [LARGE SCALE GENOMIC DNA]</scope>
    <source>
        <strain evidence="8">Bristol N2</strain>
    </source>
</reference>
<reference evidence="10" key="2">
    <citation type="journal article" date="2005" name="J. Neurobiol.">
        <title>Role of a FMRFamide-like family of neuropeptides in the pharyngeal nervous system of Caenorhabditis elegans.</title>
        <authorList>
            <person name="Papaioannou S."/>
            <person name="Marsden D."/>
            <person name="Franks C.J."/>
            <person name="Walker R.J."/>
            <person name="Holden-Dye L."/>
        </authorList>
    </citation>
    <scope>PROTEIN SEQUENCE OF 86-93</scope>
    <scope>FUNCTION</scope>
    <scope>TISSUE SPECIFICITY</scope>
</reference>
<reference evidence="10" key="3">
    <citation type="journal article" date="2001" name="Biochem. Biophys. Res. Commun.">
        <title>Isolation and preliminary biological assessment of AADGAPLIRFamide and SVPGVLRFamide from Caenorhabditis elegans.</title>
        <authorList>
            <person name="Marks N.J."/>
            <person name="Shaw C."/>
            <person name="Halton D.W."/>
            <person name="Thompson D.P."/>
            <person name="Geary T.G."/>
            <person name="Li C."/>
            <person name="Maule A.G."/>
        </authorList>
    </citation>
    <scope>PROTEIN SEQUENCE OF 104-111; 122-129 AND 198-205</scope>
    <scope>FUNCTION</scope>
    <scope>MASS SPECTROMETRY</scope>
    <scope>AMIDATION AT PHE-93; PHE-111; PHE-129; PHE-147; PHE-169; PHE-180 AND PHE-205</scope>
</reference>
<reference evidence="10" key="4">
    <citation type="journal article" date="2003" name="Nat. Neurosci.">
        <title>Inhibition of Caenorhabditis elegans social feeding by FMRFamide-related peptide activation of NPR-1.</title>
        <authorList>
            <person name="Rogers C."/>
            <person name="Reale V."/>
            <person name="Kim K."/>
            <person name="Chatwin H."/>
            <person name="Li C."/>
            <person name="Evans P."/>
            <person name="de Bono M."/>
        </authorList>
    </citation>
    <scope>FUNCTION</scope>
    <scope>TISSUE SPECIFICITY</scope>
</reference>
<reference evidence="10" key="5">
    <citation type="journal article" date="2013" name="Neuron">
        <title>Analysis of NPR-1 reveals a circuit mechanism for behavioral quiescence in C. elegans.</title>
        <authorList>
            <person name="Choi S."/>
            <person name="Chatzigeorgiou M."/>
            <person name="Taylor K.P."/>
            <person name="Schafer W.R."/>
            <person name="Kaplan J.M."/>
        </authorList>
    </citation>
    <scope>FUNCTION</scope>
</reference>
<reference key="6">
    <citation type="journal article" date="2013" name="PLoS Genet.">
        <title>Neuropeptides function in a homeostatic manner to modulate excitation-inhibition imbalance in C. elegans.</title>
        <authorList>
            <person name="Stawicki T.M."/>
            <person name="Takayanagi-Kiya S."/>
            <person name="Zhou K."/>
            <person name="Jin Y."/>
        </authorList>
    </citation>
    <scope>FUNCTION</scope>
    <scope>TISSUE SPECIFICITY</scope>
    <scope>PROTEOLYTIC CLEAVAGE</scope>
</reference>
<reference evidence="10" key="7">
    <citation type="journal article" date="2015" name="Trends Genet.">
        <title>The laboratory domestication of Caenorhabditis elegans.</title>
        <authorList>
            <person name="Sterken M.G."/>
            <person name="Snoek L.B."/>
            <person name="Kammenga J.E."/>
            <person name="Andersen E.C."/>
        </authorList>
    </citation>
    <scope>REVIEW OF FUNCTION</scope>
</reference>
<reference key="8">
    <citation type="journal article" date="2017" name="PLoS Biol.">
        <title>Chemosensory and hyperoxia circuits in C. elegans males influence sperm navigational capacity.</title>
        <authorList>
            <person name="Hoang H.D."/>
            <person name="Miller M.A."/>
        </authorList>
    </citation>
    <scope>FUNCTION</scope>
</reference>
<feature type="signal peptide" evidence="1">
    <location>
        <begin position="1"/>
        <end position="21"/>
    </location>
</feature>
<feature type="propeptide" id="PRO_0000009561">
    <location>
        <begin position="22"/>
        <end position="83"/>
    </location>
</feature>
<feature type="peptide" id="PRO_0000248055" description="EMPGVLRF-amide" evidence="10">
    <location>
        <begin position="86"/>
        <end position="93"/>
    </location>
</feature>
<feature type="propeptide" id="PRO_0000248056" evidence="10">
    <location>
        <begin position="97"/>
        <end position="101"/>
    </location>
</feature>
<feature type="peptide" id="PRO_0000009562" description="SVPGVLRF-amide 1" evidence="2">
    <location>
        <begin position="104"/>
        <end position="111"/>
    </location>
</feature>
<feature type="propeptide" id="PRO_0000009563">
    <location>
        <begin position="115"/>
        <end position="119"/>
    </location>
</feature>
<feature type="peptide" id="PRO_0000009564" description="SVPGVLRF-amide 2" evidence="2">
    <location>
        <begin position="122"/>
        <end position="129"/>
    </location>
</feature>
<feature type="propeptide" id="PRO_0000009565" evidence="10">
    <location>
        <begin position="133"/>
        <end position="137"/>
    </location>
</feature>
<feature type="peptide" id="PRO_0000248057" description="EIPGVLRF-amide">
    <location>
        <begin position="140"/>
        <end position="147"/>
    </location>
</feature>
<feature type="propeptide" id="PRO_0000248058" evidence="10">
    <location>
        <begin position="151"/>
        <end position="158"/>
    </location>
</feature>
<feature type="peptide" id="PRO_0000248059" description="SEVPGVLRF-amide">
    <location>
        <begin position="161"/>
        <end position="169"/>
    </location>
</feature>
<feature type="peptide" id="PRO_0000248060" description="DVPGVLRF-amide" evidence="10">
    <location>
        <begin position="173"/>
        <end position="180"/>
    </location>
</feature>
<feature type="propeptide" id="PRO_0000248061" evidence="10">
    <location>
        <begin position="184"/>
        <end position="195"/>
    </location>
</feature>
<feature type="peptide" id="PRO_0000009566" description="SVPGVLRF-amide 3" evidence="2">
    <location>
        <begin position="198"/>
        <end position="205"/>
    </location>
</feature>
<feature type="modified residue" description="Phenylalanine amide" evidence="2">
    <location>
        <position position="93"/>
    </location>
</feature>
<feature type="modified residue" description="Phenylalanine amide" evidence="2">
    <location>
        <position position="111"/>
    </location>
</feature>
<feature type="modified residue" description="Phenylalanine amide" evidence="2">
    <location>
        <position position="129"/>
    </location>
</feature>
<feature type="modified residue" description="Phenylalanine amide" evidence="2">
    <location>
        <position position="147"/>
    </location>
</feature>
<feature type="modified residue" description="Phenylalanine amide" evidence="2">
    <location>
        <position position="169"/>
    </location>
</feature>
<feature type="modified residue" description="Phenylalanine amide" evidence="2">
    <location>
        <position position="180"/>
    </location>
</feature>
<feature type="modified residue" description="Phenylalanine amide" evidence="2">
    <location>
        <position position="205"/>
    </location>
</feature>
<comment type="function">
    <text evidence="3 5 6 7">FMRFamide-like neuropeptides (PubMed:14555955, PubMed:23658528). Ligand to G-protein coupled receptor npr-1 (PubMed:14555955). Involved in modulating locomotion quiescence during the sleep-like state called lethargus which occurs during molting between larval and adult stages, acting via npr-1 (PubMed:23764289). Together with flp-1, plays a homeostatic role by acting on the GABAergic neural transmission at neuromuscular junctions to prevent overexcitation of the locomotor circuit (PubMed:23658528). Plays a role in the navigational capacity of sperm and the targeting of sperm derived from males to the fertilization site in the uterus of hermaphrodites (PubMed:28662030).</text>
</comment>
<comment type="function">
    <text evidence="2">SVPGVLRF-amide: Excites muscle tension.</text>
</comment>
<comment type="function">
    <molecule>EMPGVLRF-amide</molecule>
    <text evidence="3 4">Activates the G-protein coupled receptor npr-1 more effectively than other flp-18 peptides (PubMed:14555955). Inhibits the activity of dissected pharyngeal myogenic muscle system.</text>
</comment>
<comment type="subcellular location">
    <subcellularLocation>
        <location evidence="10">Secreted</location>
    </subcellularLocation>
</comment>
<comment type="tissue specificity">
    <text evidence="3 4 5">Expressed in head neurons and weakly in ventral nerve cord (PubMed:23658528). Expressed in the interneurons AVA, AIY and RIG, the motor neuron RIM and the pharyngeal neurons M2 and M3 (PubMed:14555955). EMPGVLRF-amide: Expressed in cholinergic pharyngeal motoneurons M2 and M3 (PubMed:16187307).</text>
</comment>
<comment type="PTM">
    <text evidence="11">May be processed by convertase egl-3.</text>
</comment>
<comment type="mass spectrometry" mass="875.0" method="MALDI" evidence="2">
    <molecule>SVPGVLRF-amide 1</molecule>
</comment>
<comment type="similarity">
    <text evidence="1">Belongs to the FARP (FMRFamide related peptide) family.</text>
</comment>
<comment type="caution">
    <text evidence="9">Activity as ligand to G-protein coupled receptor npr-1 might depend on a neomorphic gain-of-function sensitivity of the receptor npr-1 associated with the Bristol N2 strains.</text>
</comment>
<proteinExistence type="evidence at protein level"/>
<keyword id="KW-0027">Amidation</keyword>
<keyword id="KW-0165">Cleavage on pair of basic residues</keyword>
<keyword id="KW-0903">Direct protein sequencing</keyword>
<keyword id="KW-0527">Neuropeptide</keyword>
<keyword id="KW-1185">Reference proteome</keyword>
<keyword id="KW-0677">Repeat</keyword>
<keyword id="KW-0964">Secreted</keyword>
<keyword id="KW-0732">Signal</keyword>
<organism>
    <name type="scientific">Caenorhabditis elegans</name>
    <dbReference type="NCBI Taxonomy" id="6239"/>
    <lineage>
        <taxon>Eukaryota</taxon>
        <taxon>Metazoa</taxon>
        <taxon>Ecdysozoa</taxon>
        <taxon>Nematoda</taxon>
        <taxon>Chromadorea</taxon>
        <taxon>Rhabditida</taxon>
        <taxon>Rhabditina</taxon>
        <taxon>Rhabditomorpha</taxon>
        <taxon>Rhabditoidea</taxon>
        <taxon>Rhabditidae</taxon>
        <taxon>Peloderinae</taxon>
        <taxon>Caenorhabditis</taxon>
    </lineage>
</organism>
<evidence type="ECO:0000255" key="1"/>
<evidence type="ECO:0000269" key="2">
    <source>
    </source>
</evidence>
<evidence type="ECO:0000269" key="3">
    <source>
    </source>
</evidence>
<evidence type="ECO:0000269" key="4">
    <source>
    </source>
</evidence>
<evidence type="ECO:0000269" key="5">
    <source>
    </source>
</evidence>
<evidence type="ECO:0000269" key="6">
    <source>
    </source>
</evidence>
<evidence type="ECO:0000269" key="7">
    <source>
    </source>
</evidence>
<evidence type="ECO:0000269" key="8">
    <source>
    </source>
</evidence>
<evidence type="ECO:0000303" key="9">
    <source>
    </source>
</evidence>
<evidence type="ECO:0000305" key="10"/>
<evidence type="ECO:0000305" key="11">
    <source>
    </source>
</evidence>
<evidence type="ECO:0000312" key="12">
    <source>
        <dbReference type="WormBase" id="Y48D7A.2"/>
    </source>
</evidence>
<accession>Q9N4V0</accession>
<accession>Q86MI4</accession>
<sequence length="208" mass="23809">MQRWSGVLLISLCCLLRGALAYTEPIYEIVEEDIPAEDIEVTRTNEKQDGRVFSKRDFDGAMPGVLRFGKRGGVWEKRESSVQKKEMPGVLRFGKRAYFDEKKSVPGVLRFGKRSYFDEKKSVPGVLRFGKRDVPMDKREIPGVLRFGKRDYMADSFDKRSEVPGVLRFGKRDVPGVLRFGKRSDLEEHYAGVLLKKSVPGVLRFGRK</sequence>
<dbReference type="EMBL" id="BX284606">
    <property type="protein sequence ID" value="CCD73111.1"/>
    <property type="molecule type" value="Genomic_DNA"/>
</dbReference>
<dbReference type="RefSeq" id="NP_508514.2">
    <property type="nucleotide sequence ID" value="NM_076113.9"/>
</dbReference>
<dbReference type="BioGRID" id="45531">
    <property type="interactions" value="9"/>
</dbReference>
<dbReference type="FunCoup" id="Q9N4V0">
    <property type="interactions" value="1401"/>
</dbReference>
<dbReference type="STRING" id="6239.Y48D7A.2.2"/>
<dbReference type="PaxDb" id="6239-Y48D7A.2.1"/>
<dbReference type="EnsemblMetazoa" id="Y48D7A.2.1">
    <property type="protein sequence ID" value="Y48D7A.2.1"/>
    <property type="gene ID" value="WBGene00001461"/>
</dbReference>
<dbReference type="EnsemblMetazoa" id="Y48D7A.2.2">
    <property type="protein sequence ID" value="Y48D7A.2.2"/>
    <property type="gene ID" value="WBGene00001461"/>
</dbReference>
<dbReference type="GeneID" id="180587"/>
<dbReference type="KEGG" id="cel:CELE_Y48D7A.2"/>
<dbReference type="UCSC" id="Y48D7A.2.2">
    <property type="organism name" value="c. elegans"/>
</dbReference>
<dbReference type="AGR" id="WB:WBGene00001461"/>
<dbReference type="CTD" id="180587"/>
<dbReference type="WormBase" id="Y48D7A.2">
    <property type="protein sequence ID" value="CE33736"/>
    <property type="gene ID" value="WBGene00001461"/>
    <property type="gene designation" value="flp-18"/>
</dbReference>
<dbReference type="eggNOG" id="ENOG502ST7F">
    <property type="taxonomic scope" value="Eukaryota"/>
</dbReference>
<dbReference type="GeneTree" id="ENSGT00970000196033"/>
<dbReference type="HOGENOM" id="CLU_1321960_0_0_1"/>
<dbReference type="InParanoid" id="Q9N4V0"/>
<dbReference type="OMA" id="TEPIYEI"/>
<dbReference type="OrthoDB" id="5773473at2759"/>
<dbReference type="PhylomeDB" id="Q9N4V0"/>
<dbReference type="PRO" id="PR:Q9N4V0"/>
<dbReference type="Proteomes" id="UP000001940">
    <property type="component" value="Chromosome X"/>
</dbReference>
<dbReference type="Bgee" id="WBGene00001461">
    <property type="expression patterns" value="Expressed in larva and 4 other cell types or tissues"/>
</dbReference>
<dbReference type="GO" id="GO:0005576">
    <property type="term" value="C:extracellular region"/>
    <property type="evidence" value="ECO:0000305"/>
    <property type="project" value="UniProtKB"/>
</dbReference>
<dbReference type="GO" id="GO:0005615">
    <property type="term" value="C:extracellular space"/>
    <property type="evidence" value="ECO:0000305"/>
    <property type="project" value="WormBase"/>
</dbReference>
<dbReference type="GO" id="GO:0031841">
    <property type="term" value="F:neuropeptide Y receptor binding"/>
    <property type="evidence" value="ECO:0000305"/>
    <property type="project" value="WormBase"/>
</dbReference>
<dbReference type="GO" id="GO:0007218">
    <property type="term" value="P:neuropeptide signaling pathway"/>
    <property type="evidence" value="ECO:0000314"/>
    <property type="project" value="UniProtKB"/>
</dbReference>
<dbReference type="GO" id="GO:0006937">
    <property type="term" value="P:regulation of muscle contraction"/>
    <property type="evidence" value="ECO:0000316"/>
    <property type="project" value="UniProtKB"/>
</dbReference>
<dbReference type="GO" id="GO:0030431">
    <property type="term" value="P:sleep"/>
    <property type="evidence" value="ECO:0000315"/>
    <property type="project" value="UniProtKB"/>
</dbReference>
<dbReference type="InterPro" id="IPR051041">
    <property type="entry name" value="FMRFamide-related_np"/>
</dbReference>
<dbReference type="PANTHER" id="PTHR20986:SF17">
    <property type="entry name" value="FMRFAMIDE-LIKE NEUROPEPTIDE 18"/>
    <property type="match status" value="1"/>
</dbReference>
<dbReference type="PANTHER" id="PTHR20986">
    <property type="entry name" value="FMRFAMIDE-RELATED PEPTIDES"/>
    <property type="match status" value="1"/>
</dbReference>
<name>FLP18_CAEEL</name>